<feature type="chain" id="PRO_0000189717" description="Gamma-glutamyl phosphate reductase">
    <location>
        <begin position="1"/>
        <end position="430"/>
    </location>
</feature>
<comment type="function">
    <text evidence="1">Catalyzes the NADPH-dependent reduction of L-glutamate 5-phosphate into L-glutamate 5-semialdehyde and phosphate. The product spontaneously undergoes cyclization to form 1-pyrroline-5-carboxylate.</text>
</comment>
<comment type="catalytic activity">
    <reaction evidence="1">
        <text>L-glutamate 5-semialdehyde + phosphate + NADP(+) = L-glutamyl 5-phosphate + NADPH + H(+)</text>
        <dbReference type="Rhea" id="RHEA:19541"/>
        <dbReference type="ChEBI" id="CHEBI:15378"/>
        <dbReference type="ChEBI" id="CHEBI:43474"/>
        <dbReference type="ChEBI" id="CHEBI:57783"/>
        <dbReference type="ChEBI" id="CHEBI:58066"/>
        <dbReference type="ChEBI" id="CHEBI:58274"/>
        <dbReference type="ChEBI" id="CHEBI:58349"/>
        <dbReference type="EC" id="1.2.1.41"/>
    </reaction>
</comment>
<comment type="pathway">
    <text evidence="1">Amino-acid biosynthesis; L-proline biosynthesis; L-glutamate 5-semialdehyde from L-glutamate: step 2/2.</text>
</comment>
<comment type="subcellular location">
    <subcellularLocation>
        <location evidence="1">Cytoplasm</location>
    </subcellularLocation>
</comment>
<comment type="similarity">
    <text evidence="1">Belongs to the gamma-glutamyl phosphate reductase family.</text>
</comment>
<organism>
    <name type="scientific">Corynebacterium diphtheriae (strain ATCC 700971 / NCTC 13129 / Biotype gravis)</name>
    <dbReference type="NCBI Taxonomy" id="257309"/>
    <lineage>
        <taxon>Bacteria</taxon>
        <taxon>Bacillati</taxon>
        <taxon>Actinomycetota</taxon>
        <taxon>Actinomycetes</taxon>
        <taxon>Mycobacteriales</taxon>
        <taxon>Corynebacteriaceae</taxon>
        <taxon>Corynebacterium</taxon>
    </lineage>
</organism>
<name>PROA_CORDI</name>
<sequence>MLMNNADVRSQERKQVMVCARAAHRVAPIVAQLTSADKNAVLLDAAAALEAAGAEIIAANQRDIDQGRARGLSEALIDRLSLDSARIAGIAGGLRQVAALSDPVGEVVGGSVMPNGMQMRKVRVPLGVMGMVYEARPNVTIDAFGLALKSGNVALLRGSKSAQHSNAALVAVVHRVLESHGLPHEVVQLLPCETHESVQDLITARGLVDVVIPRGGAGLIEAVVTNATVPTIETGTGNCHFYIDRDVSDLDQAIAMLLNGKTRRCSVCNATETVLIDSALDSAYQLAIITALQEAGVTVHGDVAQLEAVGASGIVPADEHDWAEEYLSLDIACALVDGVDAAMEHIRTYSTKHTEAIATGNIVTAQRFADRVDAAAVMINASTAFTDGEQFGMGAEIGISTQKLHARGPMALPELTTTKWIVQGTGQTRP</sequence>
<proteinExistence type="inferred from homology"/>
<evidence type="ECO:0000255" key="1">
    <source>
        <dbReference type="HAMAP-Rule" id="MF_00412"/>
    </source>
</evidence>
<reference key="1">
    <citation type="journal article" date="2003" name="Nucleic Acids Res.">
        <title>The complete genome sequence and analysis of Corynebacterium diphtheriae NCTC13129.</title>
        <authorList>
            <person name="Cerdeno-Tarraga A.-M."/>
            <person name="Efstratiou A."/>
            <person name="Dover L.G."/>
            <person name="Holden M.T.G."/>
            <person name="Pallen M.J."/>
            <person name="Bentley S.D."/>
            <person name="Besra G.S."/>
            <person name="Churcher C.M."/>
            <person name="James K.D."/>
            <person name="De Zoysa A."/>
            <person name="Chillingworth T."/>
            <person name="Cronin A."/>
            <person name="Dowd L."/>
            <person name="Feltwell T."/>
            <person name="Hamlin N."/>
            <person name="Holroyd S."/>
            <person name="Jagels K."/>
            <person name="Moule S."/>
            <person name="Quail M.A."/>
            <person name="Rabbinowitsch E."/>
            <person name="Rutherford K.M."/>
            <person name="Thomson N.R."/>
            <person name="Unwin L."/>
            <person name="Whitehead S."/>
            <person name="Barrell B.G."/>
            <person name="Parkhill J."/>
        </authorList>
    </citation>
    <scope>NUCLEOTIDE SEQUENCE [LARGE SCALE GENOMIC DNA]</scope>
    <source>
        <strain>ATCC 700971 / NCTC 13129 / Biotype gravis</strain>
    </source>
</reference>
<dbReference type="EC" id="1.2.1.41" evidence="1"/>
<dbReference type="EMBL" id="BX248359">
    <property type="protein sequence ID" value="CAE50306.1"/>
    <property type="molecule type" value="Genomic_DNA"/>
</dbReference>
<dbReference type="SMR" id="Q6NFW0"/>
<dbReference type="STRING" id="257309.DIP1776"/>
<dbReference type="KEGG" id="cdi:DIP1776"/>
<dbReference type="HOGENOM" id="CLU_030231_0_0_11"/>
<dbReference type="UniPathway" id="UPA00098">
    <property type="reaction ID" value="UER00360"/>
</dbReference>
<dbReference type="Proteomes" id="UP000002198">
    <property type="component" value="Chromosome"/>
</dbReference>
<dbReference type="GO" id="GO:0005737">
    <property type="term" value="C:cytoplasm"/>
    <property type="evidence" value="ECO:0007669"/>
    <property type="project" value="UniProtKB-SubCell"/>
</dbReference>
<dbReference type="GO" id="GO:0004350">
    <property type="term" value="F:glutamate-5-semialdehyde dehydrogenase activity"/>
    <property type="evidence" value="ECO:0007669"/>
    <property type="project" value="UniProtKB-UniRule"/>
</dbReference>
<dbReference type="GO" id="GO:0050661">
    <property type="term" value="F:NADP binding"/>
    <property type="evidence" value="ECO:0007669"/>
    <property type="project" value="InterPro"/>
</dbReference>
<dbReference type="GO" id="GO:0055129">
    <property type="term" value="P:L-proline biosynthetic process"/>
    <property type="evidence" value="ECO:0007669"/>
    <property type="project" value="UniProtKB-UniRule"/>
</dbReference>
<dbReference type="CDD" id="cd07079">
    <property type="entry name" value="ALDH_F18-19_ProA-GPR"/>
    <property type="match status" value="1"/>
</dbReference>
<dbReference type="Gene3D" id="3.40.605.10">
    <property type="entry name" value="Aldehyde Dehydrogenase, Chain A, domain 1"/>
    <property type="match status" value="1"/>
</dbReference>
<dbReference type="Gene3D" id="3.40.309.10">
    <property type="entry name" value="Aldehyde Dehydrogenase, Chain A, domain 2"/>
    <property type="match status" value="1"/>
</dbReference>
<dbReference type="HAMAP" id="MF_00412">
    <property type="entry name" value="ProA"/>
    <property type="match status" value="1"/>
</dbReference>
<dbReference type="InterPro" id="IPR016161">
    <property type="entry name" value="Ald_DH/histidinol_DH"/>
</dbReference>
<dbReference type="InterPro" id="IPR016163">
    <property type="entry name" value="Ald_DH_C"/>
</dbReference>
<dbReference type="InterPro" id="IPR016162">
    <property type="entry name" value="Ald_DH_N"/>
</dbReference>
<dbReference type="InterPro" id="IPR015590">
    <property type="entry name" value="Aldehyde_DH_dom"/>
</dbReference>
<dbReference type="InterPro" id="IPR020593">
    <property type="entry name" value="G-glutamylP_reductase_CS"/>
</dbReference>
<dbReference type="InterPro" id="IPR012134">
    <property type="entry name" value="Glu-5-SA_DH"/>
</dbReference>
<dbReference type="InterPro" id="IPR000965">
    <property type="entry name" value="GPR_dom"/>
</dbReference>
<dbReference type="NCBIfam" id="NF001221">
    <property type="entry name" value="PRK00197.1"/>
    <property type="match status" value="1"/>
</dbReference>
<dbReference type="NCBIfam" id="TIGR00407">
    <property type="entry name" value="proA"/>
    <property type="match status" value="1"/>
</dbReference>
<dbReference type="PANTHER" id="PTHR11063:SF8">
    <property type="entry name" value="DELTA-1-PYRROLINE-5-CARBOXYLATE SYNTHASE"/>
    <property type="match status" value="1"/>
</dbReference>
<dbReference type="PANTHER" id="PTHR11063">
    <property type="entry name" value="GLUTAMATE SEMIALDEHYDE DEHYDROGENASE"/>
    <property type="match status" value="1"/>
</dbReference>
<dbReference type="Pfam" id="PF00171">
    <property type="entry name" value="Aldedh"/>
    <property type="match status" value="1"/>
</dbReference>
<dbReference type="PIRSF" id="PIRSF000151">
    <property type="entry name" value="GPR"/>
    <property type="match status" value="1"/>
</dbReference>
<dbReference type="SUPFAM" id="SSF53720">
    <property type="entry name" value="ALDH-like"/>
    <property type="match status" value="1"/>
</dbReference>
<dbReference type="PROSITE" id="PS01223">
    <property type="entry name" value="PROA"/>
    <property type="match status" value="1"/>
</dbReference>
<keyword id="KW-0028">Amino-acid biosynthesis</keyword>
<keyword id="KW-0963">Cytoplasm</keyword>
<keyword id="KW-0521">NADP</keyword>
<keyword id="KW-0560">Oxidoreductase</keyword>
<keyword id="KW-0641">Proline biosynthesis</keyword>
<keyword id="KW-1185">Reference proteome</keyword>
<gene>
    <name evidence="1" type="primary">proA</name>
    <name type="ordered locus">DIP1776</name>
</gene>
<accession>Q6NFW0</accession>
<protein>
    <recommendedName>
        <fullName evidence="1">Gamma-glutamyl phosphate reductase</fullName>
        <shortName evidence="1">GPR</shortName>
        <ecNumber evidence="1">1.2.1.41</ecNumber>
    </recommendedName>
    <alternativeName>
        <fullName evidence="1">Glutamate-5-semialdehyde dehydrogenase</fullName>
    </alternativeName>
    <alternativeName>
        <fullName evidence="1">Glutamyl-gamma-semialdehyde dehydrogenase</fullName>
        <shortName evidence="1">GSA dehydrogenase</shortName>
    </alternativeName>
</protein>